<feature type="chain" id="PRO_0000230625" description="Large ribosomal subunit protein uL1">
    <location>
        <begin position="1"/>
        <end position="234"/>
    </location>
</feature>
<protein>
    <recommendedName>
        <fullName evidence="1">Large ribosomal subunit protein uL1</fullName>
    </recommendedName>
    <alternativeName>
        <fullName evidence="2">50S ribosomal protein L1</fullName>
    </alternativeName>
</protein>
<name>RL1_PSET1</name>
<sequence>MAKLTKRMRTIREKVEVTKDYEINEAIALLKELATAKFVESVDVAVNLGIDARKSDQNVRGATVLPNGTGRDVRVAVFTQGANAEAAKEAGAELVGMEDLAELVKKGEMNFDVVVASPDAMRVVGQLGQILGPRGLMPNPKTGTVTPNVAEAVKNAKAGQVRYRNDKNGIIHTTIGKVDFTAEQLQQNLESLIVALKKAKPSQAKGVYVKKVSISTTMGAGVAVDQNTLSTTVA</sequence>
<organism>
    <name type="scientific">Pseudoalteromonas translucida (strain TAC 125)</name>
    <dbReference type="NCBI Taxonomy" id="326442"/>
    <lineage>
        <taxon>Bacteria</taxon>
        <taxon>Pseudomonadati</taxon>
        <taxon>Pseudomonadota</taxon>
        <taxon>Gammaproteobacteria</taxon>
        <taxon>Alteromonadales</taxon>
        <taxon>Pseudoalteromonadaceae</taxon>
        <taxon>Pseudoalteromonas</taxon>
    </lineage>
</organism>
<comment type="function">
    <text evidence="1">Binds directly to 23S rRNA. The L1 stalk is quite mobile in the ribosome, and is involved in E site tRNA release.</text>
</comment>
<comment type="function">
    <text evidence="1">Protein L1 is also a translational repressor protein, it controls the translation of the L11 operon by binding to its mRNA.</text>
</comment>
<comment type="subunit">
    <text evidence="1">Part of the 50S ribosomal subunit.</text>
</comment>
<comment type="similarity">
    <text evidence="1">Belongs to the universal ribosomal protein uL1 family.</text>
</comment>
<reference key="1">
    <citation type="journal article" date="2005" name="Genome Res.">
        <title>Coping with cold: the genome of the versatile marine Antarctica bacterium Pseudoalteromonas haloplanktis TAC125.</title>
        <authorList>
            <person name="Medigue C."/>
            <person name="Krin E."/>
            <person name="Pascal G."/>
            <person name="Barbe V."/>
            <person name="Bernsel A."/>
            <person name="Bertin P.N."/>
            <person name="Cheung F."/>
            <person name="Cruveiller S."/>
            <person name="D'Amico S."/>
            <person name="Duilio A."/>
            <person name="Fang G."/>
            <person name="Feller G."/>
            <person name="Ho C."/>
            <person name="Mangenot S."/>
            <person name="Marino G."/>
            <person name="Nilsson J."/>
            <person name="Parrilli E."/>
            <person name="Rocha E.P.C."/>
            <person name="Rouy Z."/>
            <person name="Sekowska A."/>
            <person name="Tutino M.L."/>
            <person name="Vallenet D."/>
            <person name="von Heijne G."/>
            <person name="Danchin A."/>
        </authorList>
    </citation>
    <scope>NUCLEOTIDE SEQUENCE [LARGE SCALE GENOMIC DNA]</scope>
    <source>
        <strain>TAC 125</strain>
    </source>
</reference>
<keyword id="KW-1185">Reference proteome</keyword>
<keyword id="KW-0678">Repressor</keyword>
<keyword id="KW-0687">Ribonucleoprotein</keyword>
<keyword id="KW-0689">Ribosomal protein</keyword>
<keyword id="KW-0694">RNA-binding</keyword>
<keyword id="KW-0699">rRNA-binding</keyword>
<keyword id="KW-0810">Translation regulation</keyword>
<keyword id="KW-0820">tRNA-binding</keyword>
<evidence type="ECO:0000255" key="1">
    <source>
        <dbReference type="HAMAP-Rule" id="MF_01318"/>
    </source>
</evidence>
<evidence type="ECO:0000305" key="2"/>
<proteinExistence type="inferred from homology"/>
<dbReference type="EMBL" id="CR954246">
    <property type="protein sequence ID" value="CAI85322.1"/>
    <property type="molecule type" value="Genomic_DNA"/>
</dbReference>
<dbReference type="SMR" id="Q3ILQ3"/>
<dbReference type="STRING" id="326442.PSHAa0219"/>
<dbReference type="KEGG" id="pha:PSHAa0219"/>
<dbReference type="PATRIC" id="fig|326442.8.peg.210"/>
<dbReference type="eggNOG" id="COG0081">
    <property type="taxonomic scope" value="Bacteria"/>
</dbReference>
<dbReference type="HOGENOM" id="CLU_062853_0_0_6"/>
<dbReference type="BioCyc" id="PHAL326442:PSHA_RS01080-MONOMER"/>
<dbReference type="Proteomes" id="UP000006843">
    <property type="component" value="Chromosome I"/>
</dbReference>
<dbReference type="GO" id="GO:0022625">
    <property type="term" value="C:cytosolic large ribosomal subunit"/>
    <property type="evidence" value="ECO:0007669"/>
    <property type="project" value="TreeGrafter"/>
</dbReference>
<dbReference type="GO" id="GO:0019843">
    <property type="term" value="F:rRNA binding"/>
    <property type="evidence" value="ECO:0007669"/>
    <property type="project" value="UniProtKB-UniRule"/>
</dbReference>
<dbReference type="GO" id="GO:0003735">
    <property type="term" value="F:structural constituent of ribosome"/>
    <property type="evidence" value="ECO:0007669"/>
    <property type="project" value="InterPro"/>
</dbReference>
<dbReference type="GO" id="GO:0000049">
    <property type="term" value="F:tRNA binding"/>
    <property type="evidence" value="ECO:0007669"/>
    <property type="project" value="UniProtKB-KW"/>
</dbReference>
<dbReference type="GO" id="GO:0006417">
    <property type="term" value="P:regulation of translation"/>
    <property type="evidence" value="ECO:0007669"/>
    <property type="project" value="UniProtKB-KW"/>
</dbReference>
<dbReference type="GO" id="GO:0006412">
    <property type="term" value="P:translation"/>
    <property type="evidence" value="ECO:0007669"/>
    <property type="project" value="UniProtKB-UniRule"/>
</dbReference>
<dbReference type="CDD" id="cd00403">
    <property type="entry name" value="Ribosomal_L1"/>
    <property type="match status" value="1"/>
</dbReference>
<dbReference type="FunFam" id="3.40.50.790:FF:000001">
    <property type="entry name" value="50S ribosomal protein L1"/>
    <property type="match status" value="1"/>
</dbReference>
<dbReference type="Gene3D" id="3.30.190.20">
    <property type="match status" value="1"/>
</dbReference>
<dbReference type="Gene3D" id="3.40.50.790">
    <property type="match status" value="1"/>
</dbReference>
<dbReference type="HAMAP" id="MF_01318_B">
    <property type="entry name" value="Ribosomal_uL1_B"/>
    <property type="match status" value="1"/>
</dbReference>
<dbReference type="InterPro" id="IPR005878">
    <property type="entry name" value="Ribosom_uL1_bac-type"/>
</dbReference>
<dbReference type="InterPro" id="IPR002143">
    <property type="entry name" value="Ribosomal_uL1"/>
</dbReference>
<dbReference type="InterPro" id="IPR023674">
    <property type="entry name" value="Ribosomal_uL1-like"/>
</dbReference>
<dbReference type="InterPro" id="IPR028364">
    <property type="entry name" value="Ribosomal_uL1/biogenesis"/>
</dbReference>
<dbReference type="InterPro" id="IPR016095">
    <property type="entry name" value="Ribosomal_uL1_3-a/b-sand"/>
</dbReference>
<dbReference type="InterPro" id="IPR023673">
    <property type="entry name" value="Ribosomal_uL1_CS"/>
</dbReference>
<dbReference type="NCBIfam" id="TIGR01169">
    <property type="entry name" value="rplA_bact"/>
    <property type="match status" value="1"/>
</dbReference>
<dbReference type="PANTHER" id="PTHR36427">
    <property type="entry name" value="54S RIBOSOMAL PROTEIN L1, MITOCHONDRIAL"/>
    <property type="match status" value="1"/>
</dbReference>
<dbReference type="PANTHER" id="PTHR36427:SF3">
    <property type="entry name" value="LARGE RIBOSOMAL SUBUNIT PROTEIN UL1M"/>
    <property type="match status" value="1"/>
</dbReference>
<dbReference type="Pfam" id="PF00687">
    <property type="entry name" value="Ribosomal_L1"/>
    <property type="match status" value="1"/>
</dbReference>
<dbReference type="PIRSF" id="PIRSF002155">
    <property type="entry name" value="Ribosomal_L1"/>
    <property type="match status" value="1"/>
</dbReference>
<dbReference type="SUPFAM" id="SSF56808">
    <property type="entry name" value="Ribosomal protein L1"/>
    <property type="match status" value="1"/>
</dbReference>
<dbReference type="PROSITE" id="PS01199">
    <property type="entry name" value="RIBOSOMAL_L1"/>
    <property type="match status" value="1"/>
</dbReference>
<accession>Q3ILQ3</accession>
<gene>
    <name evidence="1" type="primary">rplA</name>
    <name type="ordered locus">PSHAa0219</name>
</gene>